<reference key="1">
    <citation type="journal article" date="1998" name="J. Neurosci.">
        <title>dSLo interacting protein 1, a novel protein that interacts with large-conductance calcium-activated potassium channels.</title>
        <authorList>
            <person name="Xia X.-M."/>
            <person name="Hirschberg B."/>
            <person name="Smolik S."/>
            <person name="Forte M."/>
            <person name="Adelman J.P."/>
        </authorList>
    </citation>
    <scope>NUCLEOTIDE SEQUENCE (ISOFORM 2)</scope>
    <scope>FUNCTION</scope>
    <scope>TISSUE SPECIFICITY</scope>
    <scope>INTERACTION WITH SLO</scope>
    <source>
        <tissue>Head</tissue>
    </source>
</reference>
<reference key="2">
    <citation type="journal article" date="2000" name="Science">
        <title>The genome sequence of Drosophila melanogaster.</title>
        <authorList>
            <person name="Adams M.D."/>
            <person name="Celniker S.E."/>
            <person name="Holt R.A."/>
            <person name="Evans C.A."/>
            <person name="Gocayne J.D."/>
            <person name="Amanatides P.G."/>
            <person name="Scherer S.E."/>
            <person name="Li P.W."/>
            <person name="Hoskins R.A."/>
            <person name="Galle R.F."/>
            <person name="George R.A."/>
            <person name="Lewis S.E."/>
            <person name="Richards S."/>
            <person name="Ashburner M."/>
            <person name="Henderson S.N."/>
            <person name="Sutton G.G."/>
            <person name="Wortman J.R."/>
            <person name="Yandell M.D."/>
            <person name="Zhang Q."/>
            <person name="Chen L.X."/>
            <person name="Brandon R.C."/>
            <person name="Rogers Y.-H.C."/>
            <person name="Blazej R.G."/>
            <person name="Champe M."/>
            <person name="Pfeiffer B.D."/>
            <person name="Wan K.H."/>
            <person name="Doyle C."/>
            <person name="Baxter E.G."/>
            <person name="Helt G."/>
            <person name="Nelson C.R."/>
            <person name="Miklos G.L.G."/>
            <person name="Abril J.F."/>
            <person name="Agbayani A."/>
            <person name="An H.-J."/>
            <person name="Andrews-Pfannkoch C."/>
            <person name="Baldwin D."/>
            <person name="Ballew R.M."/>
            <person name="Basu A."/>
            <person name="Baxendale J."/>
            <person name="Bayraktaroglu L."/>
            <person name="Beasley E.M."/>
            <person name="Beeson K.Y."/>
            <person name="Benos P.V."/>
            <person name="Berman B.P."/>
            <person name="Bhandari D."/>
            <person name="Bolshakov S."/>
            <person name="Borkova D."/>
            <person name="Botchan M.R."/>
            <person name="Bouck J."/>
            <person name="Brokstein P."/>
            <person name="Brottier P."/>
            <person name="Burtis K.C."/>
            <person name="Busam D.A."/>
            <person name="Butler H."/>
            <person name="Cadieu E."/>
            <person name="Center A."/>
            <person name="Chandra I."/>
            <person name="Cherry J.M."/>
            <person name="Cawley S."/>
            <person name="Dahlke C."/>
            <person name="Davenport L.B."/>
            <person name="Davies P."/>
            <person name="de Pablos B."/>
            <person name="Delcher A."/>
            <person name="Deng Z."/>
            <person name="Mays A.D."/>
            <person name="Dew I."/>
            <person name="Dietz S.M."/>
            <person name="Dodson K."/>
            <person name="Doup L.E."/>
            <person name="Downes M."/>
            <person name="Dugan-Rocha S."/>
            <person name="Dunkov B.C."/>
            <person name="Dunn P."/>
            <person name="Durbin K.J."/>
            <person name="Evangelista C.C."/>
            <person name="Ferraz C."/>
            <person name="Ferriera S."/>
            <person name="Fleischmann W."/>
            <person name="Fosler C."/>
            <person name="Gabrielian A.E."/>
            <person name="Garg N.S."/>
            <person name="Gelbart W.M."/>
            <person name="Glasser K."/>
            <person name="Glodek A."/>
            <person name="Gong F."/>
            <person name="Gorrell J.H."/>
            <person name="Gu Z."/>
            <person name="Guan P."/>
            <person name="Harris M."/>
            <person name="Harris N.L."/>
            <person name="Harvey D.A."/>
            <person name="Heiman T.J."/>
            <person name="Hernandez J.R."/>
            <person name="Houck J."/>
            <person name="Hostin D."/>
            <person name="Houston K.A."/>
            <person name="Howland T.J."/>
            <person name="Wei M.-H."/>
            <person name="Ibegwam C."/>
            <person name="Jalali M."/>
            <person name="Kalush F."/>
            <person name="Karpen G.H."/>
            <person name="Ke Z."/>
            <person name="Kennison J.A."/>
            <person name="Ketchum K.A."/>
            <person name="Kimmel B.E."/>
            <person name="Kodira C.D."/>
            <person name="Kraft C.L."/>
            <person name="Kravitz S."/>
            <person name="Kulp D."/>
            <person name="Lai Z."/>
            <person name="Lasko P."/>
            <person name="Lei Y."/>
            <person name="Levitsky A.A."/>
            <person name="Li J.H."/>
            <person name="Li Z."/>
            <person name="Liang Y."/>
            <person name="Lin X."/>
            <person name="Liu X."/>
            <person name="Mattei B."/>
            <person name="McIntosh T.C."/>
            <person name="McLeod M.P."/>
            <person name="McPherson D."/>
            <person name="Merkulov G."/>
            <person name="Milshina N.V."/>
            <person name="Mobarry C."/>
            <person name="Morris J."/>
            <person name="Moshrefi A."/>
            <person name="Mount S.M."/>
            <person name="Moy M."/>
            <person name="Murphy B."/>
            <person name="Murphy L."/>
            <person name="Muzny D.M."/>
            <person name="Nelson D.L."/>
            <person name="Nelson D.R."/>
            <person name="Nelson K.A."/>
            <person name="Nixon K."/>
            <person name="Nusskern D.R."/>
            <person name="Pacleb J.M."/>
            <person name="Palazzolo M."/>
            <person name="Pittman G.S."/>
            <person name="Pan S."/>
            <person name="Pollard J."/>
            <person name="Puri V."/>
            <person name="Reese M.G."/>
            <person name="Reinert K."/>
            <person name="Remington K."/>
            <person name="Saunders R.D.C."/>
            <person name="Scheeler F."/>
            <person name="Shen H."/>
            <person name="Shue B.C."/>
            <person name="Siden-Kiamos I."/>
            <person name="Simpson M."/>
            <person name="Skupski M.P."/>
            <person name="Smith T.J."/>
            <person name="Spier E."/>
            <person name="Spradling A.C."/>
            <person name="Stapleton M."/>
            <person name="Strong R."/>
            <person name="Sun E."/>
            <person name="Svirskas R."/>
            <person name="Tector C."/>
            <person name="Turner R."/>
            <person name="Venter E."/>
            <person name="Wang A.H."/>
            <person name="Wang X."/>
            <person name="Wang Z.-Y."/>
            <person name="Wassarman D.A."/>
            <person name="Weinstock G.M."/>
            <person name="Weissenbach J."/>
            <person name="Williams S.M."/>
            <person name="Woodage T."/>
            <person name="Worley K.C."/>
            <person name="Wu D."/>
            <person name="Yang S."/>
            <person name="Yao Q.A."/>
            <person name="Ye J."/>
            <person name="Yeh R.-F."/>
            <person name="Zaveri J.S."/>
            <person name="Zhan M."/>
            <person name="Zhang G."/>
            <person name="Zhao Q."/>
            <person name="Zheng L."/>
            <person name="Zheng X.H."/>
            <person name="Zhong F.N."/>
            <person name="Zhong W."/>
            <person name="Zhou X."/>
            <person name="Zhu S.C."/>
            <person name="Zhu X."/>
            <person name="Smith H.O."/>
            <person name="Gibbs R.A."/>
            <person name="Myers E.W."/>
            <person name="Rubin G.M."/>
            <person name="Venter J.C."/>
        </authorList>
    </citation>
    <scope>NUCLEOTIDE SEQUENCE [LARGE SCALE GENOMIC DNA]</scope>
    <source>
        <strain>Berkeley</strain>
    </source>
</reference>
<reference key="3">
    <citation type="journal article" date="2002" name="Genome Biol.">
        <title>Annotation of the Drosophila melanogaster euchromatic genome: a systematic review.</title>
        <authorList>
            <person name="Misra S."/>
            <person name="Crosby M.A."/>
            <person name="Mungall C.J."/>
            <person name="Matthews B.B."/>
            <person name="Campbell K.S."/>
            <person name="Hradecky P."/>
            <person name="Huang Y."/>
            <person name="Kaminker J.S."/>
            <person name="Millburn G.H."/>
            <person name="Prochnik S.E."/>
            <person name="Smith C.D."/>
            <person name="Tupy J.L."/>
            <person name="Whitfield E.J."/>
            <person name="Bayraktaroglu L."/>
            <person name="Berman B.P."/>
            <person name="Bettencourt B.R."/>
            <person name="Celniker S.E."/>
            <person name="de Grey A.D.N.J."/>
            <person name="Drysdale R.A."/>
            <person name="Harris N.L."/>
            <person name="Richter J."/>
            <person name="Russo S."/>
            <person name="Schroeder A.J."/>
            <person name="Shu S.Q."/>
            <person name="Stapleton M."/>
            <person name="Yamada C."/>
            <person name="Ashburner M."/>
            <person name="Gelbart W.M."/>
            <person name="Rubin G.M."/>
            <person name="Lewis S.E."/>
        </authorList>
    </citation>
    <scope>GENOME REANNOTATION</scope>
    <source>
        <strain>Berkeley</strain>
    </source>
</reference>
<reference key="4">
    <citation type="journal article" date="2002" name="Genome Biol.">
        <title>A Drosophila full-length cDNA resource.</title>
        <authorList>
            <person name="Stapleton M."/>
            <person name="Carlson J.W."/>
            <person name="Brokstein P."/>
            <person name="Yu C."/>
            <person name="Champe M."/>
            <person name="George R.A."/>
            <person name="Guarin H."/>
            <person name="Kronmiller B."/>
            <person name="Pacleb J.M."/>
            <person name="Park S."/>
            <person name="Wan K.H."/>
            <person name="Rubin G.M."/>
            <person name="Celniker S.E."/>
        </authorList>
    </citation>
    <scope>NUCLEOTIDE SEQUENCE [LARGE SCALE MRNA] (ISOFORM 1)</scope>
    <source>
        <strain>Berkeley</strain>
        <tissue>Embryo</tissue>
    </source>
</reference>
<reference key="5">
    <citation type="journal article" date="2002" name="Science">
        <title>Nucleotide variation along the Drosophila melanogaster fourth chromosome.</title>
        <authorList>
            <person name="Wang W."/>
            <person name="Thornton K."/>
            <person name="Berry A."/>
            <person name="Long M."/>
        </authorList>
    </citation>
    <scope>NUCLEOTIDE SEQUENCE OF 252-282</scope>
    <source>
        <strain>253.27</strain>
        <strain>253.30</strain>
    </source>
</reference>
<proteinExistence type="evidence at protein level"/>
<keyword id="KW-0025">Alternative splicing</keyword>
<keyword id="KW-1185">Reference proteome</keyword>
<name>SLIP1_DROME</name>
<organism>
    <name type="scientific">Drosophila melanogaster</name>
    <name type="common">Fruit fly</name>
    <dbReference type="NCBI Taxonomy" id="7227"/>
    <lineage>
        <taxon>Eukaryota</taxon>
        <taxon>Metazoa</taxon>
        <taxon>Ecdysozoa</taxon>
        <taxon>Arthropoda</taxon>
        <taxon>Hexapoda</taxon>
        <taxon>Insecta</taxon>
        <taxon>Pterygota</taxon>
        <taxon>Neoptera</taxon>
        <taxon>Endopterygota</taxon>
        <taxon>Diptera</taxon>
        <taxon>Brachycera</taxon>
        <taxon>Muscomorpha</taxon>
        <taxon>Ephydroidea</taxon>
        <taxon>Drosophilidae</taxon>
        <taxon>Drosophila</taxon>
        <taxon>Sophophora</taxon>
    </lineage>
</organism>
<evidence type="ECO:0000255" key="1">
    <source>
        <dbReference type="PROSITE-ProRule" id="PRU00143"/>
    </source>
</evidence>
<evidence type="ECO:0000256" key="2">
    <source>
        <dbReference type="SAM" id="MobiDB-lite"/>
    </source>
</evidence>
<evidence type="ECO:0000269" key="3">
    <source>
    </source>
</evidence>
<evidence type="ECO:0000305" key="4"/>
<comment type="function">
    <text evidence="3">May selectively reduce calcium-activated potassium channel (Slo) currents by reducing the number of Slo channels in the plasma membrane.</text>
</comment>
<comment type="subunit">
    <text evidence="3">Interacts with Slo.</text>
</comment>
<comment type="interaction">
    <interactant intactId="EBI-123875">
        <id>Q8MR31</id>
    </interactant>
    <interactant intactId="EBI-426805">
        <id>Q03720</id>
        <label>slo</label>
    </interactant>
    <organismsDiffer>false</organismsDiffer>
    <experiments>5</experiments>
</comment>
<comment type="alternative products">
    <event type="alternative splicing"/>
    <isoform>
        <id>Q8MR31-1</id>
        <name>1</name>
        <sequence type="displayed"/>
    </isoform>
    <isoform>
        <id>Q8MR31-2</id>
        <name>2</name>
        <sequence type="described" ref="VSP_010098"/>
    </isoform>
</comment>
<comment type="tissue specificity">
    <text evidence="3">In embryos, it is expressed throughout the CNS and in several peripheral locations. Colocalizes with Slo.</text>
</comment>
<comment type="sequence caution" evidence="4">
    <conflict type="erroneous initiation">
        <sequence resource="EMBL-CDS" id="AAM52669"/>
    </conflict>
</comment>
<sequence length="767" mass="85846">MSIADVEYEYVVLKINGYDISHLSRYEAVQKFLQSKETLVVEIRRQKHNALDLELKHGSNAKISKVDNPGELSVLTDKSAEGTITAASASQQINCPSSTSLKEIETKTPVVLTLRARSHEDRLGSLQAASKETQTQSVVGTDVLKDNDLVNTITDNFIEHEHHLFEQCLEPEIDIEEVTLVKGVEQSSSNQIGLIVTSSGIQQSSTDTNKGDILGNVLEHSEDVFISGVQPESIAYRDGRLRQGDQILRINGLDVKNQEELETQIARSSTSVTLLVSRILYPEDDDDEDIHFEYANTFLPDDYTNVVDKLDKVLLTHVKSLEELSNKSAMQSDECYHIPEKNSSDSNVKISSLAKNIIEQSTKSCSKIKLRPNANLDYKKKFNLPLSQEEVHLQYEYDESEHIYETIPEDSESEPVYCSPYQRSNDKTSIGCSSPIASRPAESLERTMQQQTQRVAQWLGLKPQYQKTRQTLVGRPPPLKLVQQPTCSRVFTLRSTLTNTSASSSSGVAYSSYGQNNVVTGNAAAPGEEVDNSSSAYNTGDSNNSASPHQNTTNPDEAIATGRKLDSTVIDSPNDHLDATGVSTMLLLPFGKSGRIGLCSSNLPTAYVSERYTNVGSENEIHPLKSDIEILRVKPTDDSYSHCPQFNAPNLSSYHFVSSQEVANRCHISTSLQKNATLLNGESAEEIPMVWKVKRRPDGTRYIVKRPVRNRPQVALRKNMRYNEVTTTEDDTISEVKIGRYWTKEERKRHIERAREKRHHQTQQQQQ</sequence>
<accession>Q8MR31</accession>
<accession>Q8STH5</accession>
<accession>Q9V4F2</accession>
<feature type="chain" id="PRO_0000071957" description="Slo-interacting protein 1">
    <location>
        <begin position="1"/>
        <end position="767"/>
    </location>
</feature>
<feature type="domain" description="PDZ" evidence="1">
    <location>
        <begin position="202"/>
        <end position="280"/>
    </location>
</feature>
<feature type="region of interest" description="Disordered" evidence="2">
    <location>
        <begin position="521"/>
        <end position="557"/>
    </location>
</feature>
<feature type="region of interest" description="Disordered" evidence="2">
    <location>
        <begin position="744"/>
        <end position="767"/>
    </location>
</feature>
<feature type="compositionally biased region" description="Polar residues" evidence="2">
    <location>
        <begin position="532"/>
        <end position="555"/>
    </location>
</feature>
<feature type="compositionally biased region" description="Basic and acidic residues" evidence="2">
    <location>
        <begin position="744"/>
        <end position="755"/>
    </location>
</feature>
<feature type="splice variant" id="VSP_010098" description="In isoform 2." evidence="4">
    <location>
        <begin position="215"/>
        <end position="520"/>
    </location>
</feature>
<dbReference type="EMBL" id="AE014135">
    <property type="protein sequence ID" value="AAF59321.1"/>
    <property type="molecule type" value="Genomic_DNA"/>
</dbReference>
<dbReference type="EMBL" id="AY122157">
    <property type="protein sequence ID" value="AAM52669.1"/>
    <property type="status" value="ALT_INIT"/>
    <property type="molecule type" value="mRNA"/>
</dbReference>
<dbReference type="EMBL" id="AF433691">
    <property type="protein sequence ID" value="AAM17954.1"/>
    <property type="molecule type" value="Genomic_DNA"/>
</dbReference>
<dbReference type="EMBL" id="AF433692">
    <property type="protein sequence ID" value="AAM17955.1"/>
    <property type="molecule type" value="Genomic_DNA"/>
</dbReference>
<dbReference type="RefSeq" id="NP_651933.1">
    <molecule id="Q8MR31-1"/>
    <property type="nucleotide sequence ID" value="NM_143676.2"/>
</dbReference>
<dbReference type="SMR" id="Q8MR31"/>
<dbReference type="BioGRID" id="68640">
    <property type="interactions" value="7"/>
</dbReference>
<dbReference type="DIP" id="DIP-18620N"/>
<dbReference type="FunCoup" id="Q8MR31">
    <property type="interactions" value="17"/>
</dbReference>
<dbReference type="IntAct" id="Q8MR31">
    <property type="interactions" value="1"/>
</dbReference>
<dbReference type="STRING" id="7227.FBpp0088159"/>
<dbReference type="PaxDb" id="7227-FBpp0088159"/>
<dbReference type="DNASU" id="43809"/>
<dbReference type="EnsemblMetazoa" id="FBtr0089090">
    <molecule id="Q8MR31-1"/>
    <property type="protein sequence ID" value="FBpp0088159"/>
    <property type="gene ID" value="FBgn0024728"/>
</dbReference>
<dbReference type="GeneID" id="43809"/>
<dbReference type="KEGG" id="dme:Dmel_CG1783"/>
<dbReference type="UCSC" id="CG1783-RA">
    <molecule id="Q8MR31-1"/>
    <property type="organism name" value="d. melanogaster"/>
</dbReference>
<dbReference type="AGR" id="FB:FBgn0024728"/>
<dbReference type="CTD" id="43809"/>
<dbReference type="FlyBase" id="FBgn0024728">
    <property type="gene designation" value="Slip1"/>
</dbReference>
<dbReference type="VEuPathDB" id="VectorBase:FBgn0024728"/>
<dbReference type="eggNOG" id="KOG0312">
    <property type="taxonomic scope" value="Eukaryota"/>
</dbReference>
<dbReference type="GeneTree" id="ENSGT00950000183062"/>
<dbReference type="HOGENOM" id="CLU_027236_0_0_1"/>
<dbReference type="InParanoid" id="Q8MR31"/>
<dbReference type="OMA" id="TMEQDYY"/>
<dbReference type="OrthoDB" id="6270329at2759"/>
<dbReference type="PhylomeDB" id="Q8MR31"/>
<dbReference type="SignaLink" id="Q8MR31"/>
<dbReference type="BioGRID-ORCS" id="43809">
    <property type="hits" value="0 hits in 3 CRISPR screens"/>
</dbReference>
<dbReference type="GenomeRNAi" id="43809"/>
<dbReference type="PRO" id="PR:Q8MR31"/>
<dbReference type="Proteomes" id="UP000000803">
    <property type="component" value="Chromosome 4"/>
</dbReference>
<dbReference type="Bgee" id="FBgn0024728">
    <property type="expression patterns" value="Expressed in wing disc and 259 other cell types or tissues"/>
</dbReference>
<dbReference type="ExpressionAtlas" id="Q8MR31">
    <property type="expression patterns" value="baseline and differential"/>
</dbReference>
<dbReference type="GO" id="GO:0015459">
    <property type="term" value="F:potassium channel regulator activity"/>
    <property type="evidence" value="ECO:0000314"/>
    <property type="project" value="UniProtKB"/>
</dbReference>
<dbReference type="FunFam" id="2.30.42.10:FF:000375">
    <property type="entry name" value="Slip1, isoform C"/>
    <property type="match status" value="1"/>
</dbReference>
<dbReference type="Gene3D" id="2.30.42.10">
    <property type="match status" value="1"/>
</dbReference>
<dbReference type="InterPro" id="IPR051971">
    <property type="entry name" value="E3_ubiquitin-PDZ_ligase"/>
</dbReference>
<dbReference type="InterPro" id="IPR001478">
    <property type="entry name" value="PDZ"/>
</dbReference>
<dbReference type="InterPro" id="IPR036034">
    <property type="entry name" value="PDZ_sf"/>
</dbReference>
<dbReference type="PANTHER" id="PTHR15545">
    <property type="entry name" value="PDZ DOMAIN CONTAINING RING FINGER PROTEIN 3, 4"/>
    <property type="match status" value="1"/>
</dbReference>
<dbReference type="PANTHER" id="PTHR15545:SF8">
    <property type="entry name" value="SLO-INTERACTING PROTEIN 1"/>
    <property type="match status" value="1"/>
</dbReference>
<dbReference type="Pfam" id="PF00595">
    <property type="entry name" value="PDZ"/>
    <property type="match status" value="1"/>
</dbReference>
<dbReference type="SMART" id="SM00228">
    <property type="entry name" value="PDZ"/>
    <property type="match status" value="1"/>
</dbReference>
<dbReference type="SUPFAM" id="SSF50156">
    <property type="entry name" value="PDZ domain-like"/>
    <property type="match status" value="1"/>
</dbReference>
<dbReference type="PROSITE" id="PS50106">
    <property type="entry name" value="PDZ"/>
    <property type="match status" value="1"/>
</dbReference>
<protein>
    <recommendedName>
        <fullName>Slo-interacting protein 1</fullName>
    </recommendedName>
    <alternativeName>
        <fullName>dSLIP1</fullName>
    </alternativeName>
</protein>
<gene>
    <name type="primary">Slip1</name>
    <name type="ORF">CG1783</name>
</gene>